<accession>B5RFI8</accession>
<proteinExistence type="inferred from homology"/>
<gene>
    <name evidence="1" type="primary">nudC</name>
    <name type="ordered locus">SG3440</name>
</gene>
<feature type="chain" id="PRO_1000115249" description="NAD-capped RNA hydrolase NudC">
    <location>
        <begin position="1"/>
        <end position="257"/>
    </location>
</feature>
<feature type="domain" description="Nudix hydrolase" evidence="1">
    <location>
        <begin position="125"/>
        <end position="248"/>
    </location>
</feature>
<feature type="short sequence motif" description="Nudix box" evidence="1">
    <location>
        <begin position="159"/>
        <end position="180"/>
    </location>
</feature>
<feature type="binding site" evidence="1">
    <location>
        <position position="69"/>
    </location>
    <ligand>
        <name>substrate</name>
    </ligand>
</feature>
<feature type="binding site" evidence="1">
    <location>
        <position position="98"/>
    </location>
    <ligand>
        <name>Zn(2+)</name>
        <dbReference type="ChEBI" id="CHEBI:29105"/>
    </ligand>
</feature>
<feature type="binding site" evidence="1">
    <location>
        <position position="101"/>
    </location>
    <ligand>
        <name>Zn(2+)</name>
        <dbReference type="ChEBI" id="CHEBI:29105"/>
    </ligand>
</feature>
<feature type="binding site" evidence="1">
    <location>
        <position position="111"/>
    </location>
    <ligand>
        <name>substrate</name>
    </ligand>
</feature>
<feature type="binding site" evidence="1">
    <location>
        <position position="116"/>
    </location>
    <ligand>
        <name>Zn(2+)</name>
        <dbReference type="ChEBI" id="CHEBI:29105"/>
    </ligand>
</feature>
<feature type="binding site" evidence="1">
    <location>
        <position position="119"/>
    </location>
    <ligand>
        <name>Zn(2+)</name>
        <dbReference type="ChEBI" id="CHEBI:29105"/>
    </ligand>
</feature>
<feature type="binding site" evidence="1">
    <location>
        <position position="124"/>
    </location>
    <ligand>
        <name>substrate</name>
    </ligand>
</feature>
<feature type="binding site" evidence="1">
    <location>
        <position position="158"/>
    </location>
    <ligand>
        <name>a divalent metal cation</name>
        <dbReference type="ChEBI" id="CHEBI:60240"/>
        <label>1</label>
    </ligand>
</feature>
<feature type="binding site" evidence="1">
    <location>
        <position position="174"/>
    </location>
    <ligand>
        <name>a divalent metal cation</name>
        <dbReference type="ChEBI" id="CHEBI:60240"/>
        <label>2</label>
    </ligand>
</feature>
<feature type="binding site" evidence="1">
    <location>
        <position position="174"/>
    </location>
    <ligand>
        <name>a divalent metal cation</name>
        <dbReference type="ChEBI" id="CHEBI:60240"/>
        <label>3</label>
    </ligand>
</feature>
<feature type="binding site" evidence="1">
    <location>
        <position position="178"/>
    </location>
    <ligand>
        <name>a divalent metal cation</name>
        <dbReference type="ChEBI" id="CHEBI:60240"/>
        <label>1</label>
    </ligand>
</feature>
<feature type="binding site" evidence="1">
    <location>
        <position position="178"/>
    </location>
    <ligand>
        <name>a divalent metal cation</name>
        <dbReference type="ChEBI" id="CHEBI:60240"/>
        <label>3</label>
    </ligand>
</feature>
<feature type="binding site" evidence="1">
    <location>
        <begin position="192"/>
        <end position="199"/>
    </location>
    <ligand>
        <name>substrate</name>
    </ligand>
</feature>
<feature type="binding site" evidence="1">
    <location>
        <position position="219"/>
    </location>
    <ligand>
        <name>a divalent metal cation</name>
        <dbReference type="ChEBI" id="CHEBI:60240"/>
        <label>1</label>
    </ligand>
</feature>
<feature type="binding site" evidence="1">
    <location>
        <position position="219"/>
    </location>
    <ligand>
        <name>a divalent metal cation</name>
        <dbReference type="ChEBI" id="CHEBI:60240"/>
        <label>3</label>
    </ligand>
</feature>
<feature type="binding site" evidence="1">
    <location>
        <position position="241"/>
    </location>
    <ligand>
        <name>substrate</name>
    </ligand>
</feature>
<evidence type="ECO:0000255" key="1">
    <source>
        <dbReference type="HAMAP-Rule" id="MF_00297"/>
    </source>
</evidence>
<organism>
    <name type="scientific">Salmonella gallinarum (strain 287/91 / NCTC 13346)</name>
    <dbReference type="NCBI Taxonomy" id="550538"/>
    <lineage>
        <taxon>Bacteria</taxon>
        <taxon>Pseudomonadati</taxon>
        <taxon>Pseudomonadota</taxon>
        <taxon>Gammaproteobacteria</taxon>
        <taxon>Enterobacterales</taxon>
        <taxon>Enterobacteriaceae</taxon>
        <taxon>Salmonella</taxon>
    </lineage>
</organism>
<reference key="1">
    <citation type="journal article" date="2008" name="Genome Res.">
        <title>Comparative genome analysis of Salmonella enteritidis PT4 and Salmonella gallinarum 287/91 provides insights into evolutionary and host adaptation pathways.</title>
        <authorList>
            <person name="Thomson N.R."/>
            <person name="Clayton D.J."/>
            <person name="Windhorst D."/>
            <person name="Vernikos G."/>
            <person name="Davidson S."/>
            <person name="Churcher C."/>
            <person name="Quail M.A."/>
            <person name="Stevens M."/>
            <person name="Jones M.A."/>
            <person name="Watson M."/>
            <person name="Barron A."/>
            <person name="Layton A."/>
            <person name="Pickard D."/>
            <person name="Kingsley R.A."/>
            <person name="Bignell A."/>
            <person name="Clark L."/>
            <person name="Harris B."/>
            <person name="Ormond D."/>
            <person name="Abdellah Z."/>
            <person name="Brooks K."/>
            <person name="Cherevach I."/>
            <person name="Chillingworth T."/>
            <person name="Woodward J."/>
            <person name="Norberczak H."/>
            <person name="Lord A."/>
            <person name="Arrowsmith C."/>
            <person name="Jagels K."/>
            <person name="Moule S."/>
            <person name="Mungall K."/>
            <person name="Saunders M."/>
            <person name="Whitehead S."/>
            <person name="Chabalgoity J.A."/>
            <person name="Maskell D."/>
            <person name="Humphreys T."/>
            <person name="Roberts M."/>
            <person name="Barrow P.A."/>
            <person name="Dougan G."/>
            <person name="Parkhill J."/>
        </authorList>
    </citation>
    <scope>NUCLEOTIDE SEQUENCE [LARGE SCALE GENOMIC DNA]</scope>
    <source>
        <strain>287/91 / NCTC 13346</strain>
    </source>
</reference>
<name>NUDC_SALG2</name>
<sequence>MDRIIEKLESGWWIVSHEQKLWLPYGELPHGLAANFDLVGQRALRIGEWQGEPVWLVLQHRRHDMGSVRQVIDQDAGLFQLAGRGVQLAEFYRSHKFCGYCGHPMHPSKTEWAMLCSHCRERYYPQIAPCIIVAIRREDSILLAQHVRHRNGVHTVLAGFVEVGETLEQAVAREVMEESGIKVKNLRYVTSQPWPFPQSLMTAFMAEYDSGEIVIDPKELLEANWYRYDDLPLLPPPGTVARRLIEDTVAMCRAEYD</sequence>
<keyword id="KW-0378">Hydrolase</keyword>
<keyword id="KW-0460">Magnesium</keyword>
<keyword id="KW-0464">Manganese</keyword>
<keyword id="KW-0479">Metal-binding</keyword>
<keyword id="KW-0520">NAD</keyword>
<keyword id="KW-0862">Zinc</keyword>
<protein>
    <recommendedName>
        <fullName evidence="1">NAD-capped RNA hydrolase NudC</fullName>
        <shortName evidence="1">DeNADding enzyme NudC</shortName>
        <ecNumber evidence="1">3.6.1.-</ecNumber>
    </recommendedName>
    <alternativeName>
        <fullName evidence="1">NADH pyrophosphatase</fullName>
        <ecNumber evidence="1">3.6.1.22</ecNumber>
    </alternativeName>
</protein>
<dbReference type="EC" id="3.6.1.-" evidence="1"/>
<dbReference type="EC" id="3.6.1.22" evidence="1"/>
<dbReference type="EMBL" id="AM933173">
    <property type="protein sequence ID" value="CAR39231.1"/>
    <property type="molecule type" value="Genomic_DNA"/>
</dbReference>
<dbReference type="RefSeq" id="WP_000373958.1">
    <property type="nucleotide sequence ID" value="NC_011274.1"/>
</dbReference>
<dbReference type="SMR" id="B5RFI8"/>
<dbReference type="KEGG" id="seg:SG3440"/>
<dbReference type="HOGENOM" id="CLU_037162_0_1_6"/>
<dbReference type="Proteomes" id="UP000008321">
    <property type="component" value="Chromosome"/>
</dbReference>
<dbReference type="GO" id="GO:0005829">
    <property type="term" value="C:cytosol"/>
    <property type="evidence" value="ECO:0007669"/>
    <property type="project" value="TreeGrafter"/>
</dbReference>
<dbReference type="GO" id="GO:0000287">
    <property type="term" value="F:magnesium ion binding"/>
    <property type="evidence" value="ECO:0007669"/>
    <property type="project" value="UniProtKB-UniRule"/>
</dbReference>
<dbReference type="GO" id="GO:0030145">
    <property type="term" value="F:manganese ion binding"/>
    <property type="evidence" value="ECO:0007669"/>
    <property type="project" value="UniProtKB-UniRule"/>
</dbReference>
<dbReference type="GO" id="GO:0000210">
    <property type="term" value="F:NAD+ diphosphatase activity"/>
    <property type="evidence" value="ECO:0007669"/>
    <property type="project" value="UniProtKB-UniRule"/>
</dbReference>
<dbReference type="GO" id="GO:0035529">
    <property type="term" value="F:NADH pyrophosphatase activity"/>
    <property type="evidence" value="ECO:0007669"/>
    <property type="project" value="TreeGrafter"/>
</dbReference>
<dbReference type="GO" id="GO:0110153">
    <property type="term" value="F:RNA NAD-cap (NMN-forming) hydrolase activity"/>
    <property type="evidence" value="ECO:0007669"/>
    <property type="project" value="RHEA"/>
</dbReference>
<dbReference type="GO" id="GO:0008270">
    <property type="term" value="F:zinc ion binding"/>
    <property type="evidence" value="ECO:0007669"/>
    <property type="project" value="UniProtKB-UniRule"/>
</dbReference>
<dbReference type="GO" id="GO:0019677">
    <property type="term" value="P:NAD catabolic process"/>
    <property type="evidence" value="ECO:0007669"/>
    <property type="project" value="TreeGrafter"/>
</dbReference>
<dbReference type="GO" id="GO:0006734">
    <property type="term" value="P:NADH metabolic process"/>
    <property type="evidence" value="ECO:0007669"/>
    <property type="project" value="TreeGrafter"/>
</dbReference>
<dbReference type="GO" id="GO:0006742">
    <property type="term" value="P:NADP catabolic process"/>
    <property type="evidence" value="ECO:0007669"/>
    <property type="project" value="TreeGrafter"/>
</dbReference>
<dbReference type="CDD" id="cd03429">
    <property type="entry name" value="NUDIX_NADH_pyrophosphatase_Nudt13"/>
    <property type="match status" value="1"/>
</dbReference>
<dbReference type="FunFam" id="3.90.79.10:FF:000004">
    <property type="entry name" value="NADH pyrophosphatase"/>
    <property type="match status" value="1"/>
</dbReference>
<dbReference type="FunFam" id="3.90.79.20:FF:000001">
    <property type="entry name" value="NADH pyrophosphatase"/>
    <property type="match status" value="1"/>
</dbReference>
<dbReference type="Gene3D" id="3.90.79.20">
    <property type="match status" value="1"/>
</dbReference>
<dbReference type="Gene3D" id="3.90.79.10">
    <property type="entry name" value="Nucleoside Triphosphate Pyrophosphohydrolase"/>
    <property type="match status" value="1"/>
</dbReference>
<dbReference type="HAMAP" id="MF_00297">
    <property type="entry name" value="Nudix_NudC"/>
    <property type="match status" value="1"/>
</dbReference>
<dbReference type="InterPro" id="IPR050241">
    <property type="entry name" value="NAD-cap_RNA_hydrolase_NudC"/>
</dbReference>
<dbReference type="InterPro" id="IPR049734">
    <property type="entry name" value="NudC-like_C"/>
</dbReference>
<dbReference type="InterPro" id="IPR015797">
    <property type="entry name" value="NUDIX_hydrolase-like_dom_sf"/>
</dbReference>
<dbReference type="InterPro" id="IPR020084">
    <property type="entry name" value="NUDIX_hydrolase_CS"/>
</dbReference>
<dbReference type="InterPro" id="IPR000086">
    <property type="entry name" value="NUDIX_hydrolase_dom"/>
</dbReference>
<dbReference type="InterPro" id="IPR022925">
    <property type="entry name" value="RNA_Hydrolase_NudC"/>
</dbReference>
<dbReference type="InterPro" id="IPR015376">
    <property type="entry name" value="Znr_NADH_PPase"/>
</dbReference>
<dbReference type="NCBIfam" id="NF001299">
    <property type="entry name" value="PRK00241.1"/>
    <property type="match status" value="1"/>
</dbReference>
<dbReference type="PANTHER" id="PTHR42904:SF6">
    <property type="entry name" value="NAD-CAPPED RNA HYDROLASE NUDT12"/>
    <property type="match status" value="1"/>
</dbReference>
<dbReference type="PANTHER" id="PTHR42904">
    <property type="entry name" value="NUDIX HYDROLASE, NUDC SUBFAMILY"/>
    <property type="match status" value="1"/>
</dbReference>
<dbReference type="Pfam" id="PF00293">
    <property type="entry name" value="NUDIX"/>
    <property type="match status" value="1"/>
</dbReference>
<dbReference type="Pfam" id="PF09297">
    <property type="entry name" value="Zn_ribbon_NUD"/>
    <property type="match status" value="1"/>
</dbReference>
<dbReference type="SUPFAM" id="SSF55811">
    <property type="entry name" value="Nudix"/>
    <property type="match status" value="2"/>
</dbReference>
<dbReference type="PROSITE" id="PS51462">
    <property type="entry name" value="NUDIX"/>
    <property type="match status" value="1"/>
</dbReference>
<dbReference type="PROSITE" id="PS00893">
    <property type="entry name" value="NUDIX_BOX"/>
    <property type="match status" value="1"/>
</dbReference>
<comment type="function">
    <text evidence="1">mRNA decapping enzyme that specifically removes the nicotinamide adenine dinucleotide (NAD) cap from a subset of mRNAs by hydrolyzing the diphosphate linkage to produce nicotinamide mononucleotide (NMN) and 5' monophosphate mRNA. The NAD-cap is present at the 5'-end of some mRNAs and stabilizes RNA against 5'-processing. Has preference for mRNAs with a 5'-end purine. Catalyzes the hydrolysis of a broad range of dinucleotide pyrophosphates.</text>
</comment>
<comment type="catalytic activity">
    <reaction evidence="1">
        <text>a 5'-end NAD(+)-phospho-ribonucleoside in mRNA + H2O = a 5'-end phospho-adenosine-phospho-ribonucleoside in mRNA + beta-nicotinamide D-ribonucleotide + 2 H(+)</text>
        <dbReference type="Rhea" id="RHEA:60876"/>
        <dbReference type="Rhea" id="RHEA-COMP:15698"/>
        <dbReference type="Rhea" id="RHEA-COMP:15719"/>
        <dbReference type="ChEBI" id="CHEBI:14649"/>
        <dbReference type="ChEBI" id="CHEBI:15377"/>
        <dbReference type="ChEBI" id="CHEBI:15378"/>
        <dbReference type="ChEBI" id="CHEBI:144029"/>
        <dbReference type="ChEBI" id="CHEBI:144051"/>
    </reaction>
    <physiologicalReaction direction="left-to-right" evidence="1">
        <dbReference type="Rhea" id="RHEA:60877"/>
    </physiologicalReaction>
</comment>
<comment type="catalytic activity">
    <reaction evidence="1">
        <text>NAD(+) + H2O = beta-nicotinamide D-ribonucleotide + AMP + 2 H(+)</text>
        <dbReference type="Rhea" id="RHEA:11800"/>
        <dbReference type="ChEBI" id="CHEBI:14649"/>
        <dbReference type="ChEBI" id="CHEBI:15377"/>
        <dbReference type="ChEBI" id="CHEBI:15378"/>
        <dbReference type="ChEBI" id="CHEBI:57540"/>
        <dbReference type="ChEBI" id="CHEBI:456215"/>
        <dbReference type="EC" id="3.6.1.22"/>
    </reaction>
</comment>
<comment type="catalytic activity">
    <reaction evidence="1">
        <text>NADH + H2O = reduced beta-nicotinamide D-ribonucleotide + AMP + 2 H(+)</text>
        <dbReference type="Rhea" id="RHEA:48868"/>
        <dbReference type="ChEBI" id="CHEBI:15377"/>
        <dbReference type="ChEBI" id="CHEBI:15378"/>
        <dbReference type="ChEBI" id="CHEBI:57945"/>
        <dbReference type="ChEBI" id="CHEBI:90832"/>
        <dbReference type="ChEBI" id="CHEBI:456215"/>
        <dbReference type="EC" id="3.6.1.22"/>
    </reaction>
</comment>
<comment type="cofactor">
    <cofactor evidence="1">
        <name>Mg(2+)</name>
        <dbReference type="ChEBI" id="CHEBI:18420"/>
    </cofactor>
    <cofactor evidence="1">
        <name>Mn(2+)</name>
        <dbReference type="ChEBI" id="CHEBI:29035"/>
    </cofactor>
    <text evidence="1">Divalent metal cations. Mg(2+) or Mn(2+).</text>
</comment>
<comment type="cofactor">
    <cofactor evidence="1">
        <name>Zn(2+)</name>
        <dbReference type="ChEBI" id="CHEBI:29105"/>
    </cofactor>
    <text evidence="1">Binds 1 zinc ion per subunit.</text>
</comment>
<comment type="subunit">
    <text evidence="1">Homodimer.</text>
</comment>
<comment type="similarity">
    <text evidence="1">Belongs to the Nudix hydrolase family. NudC subfamily.</text>
</comment>